<gene>
    <name evidence="1" type="primary">ybjQ</name>
    <name type="ordered locus">SeD_A0997</name>
</gene>
<protein>
    <recommendedName>
        <fullName evidence="1">UPF0145 protein YbjQ</fullName>
    </recommendedName>
</protein>
<reference key="1">
    <citation type="journal article" date="2011" name="J. Bacteriol.">
        <title>Comparative genomics of 28 Salmonella enterica isolates: evidence for CRISPR-mediated adaptive sublineage evolution.</title>
        <authorList>
            <person name="Fricke W.F."/>
            <person name="Mammel M.K."/>
            <person name="McDermott P.F."/>
            <person name="Tartera C."/>
            <person name="White D.G."/>
            <person name="Leclerc J.E."/>
            <person name="Ravel J."/>
            <person name="Cebula T.A."/>
        </authorList>
    </citation>
    <scope>NUCLEOTIDE SEQUENCE [LARGE SCALE GENOMIC DNA]</scope>
    <source>
        <strain>CT_02021853</strain>
    </source>
</reference>
<sequence length="107" mass="11403">MQFSTTPTLEGQSIVEYCGVVTGEAILGANIFRDFFAGIRDIVGGRSGAYEKELRKAREIALQELGEQAKALGADAVVGIDIDYETVGKDGSMLMVSVSGTAVKTRR</sequence>
<accession>B5FQ06</accession>
<feature type="chain" id="PRO_1000120010" description="UPF0145 protein YbjQ">
    <location>
        <begin position="1"/>
        <end position="107"/>
    </location>
</feature>
<comment type="similarity">
    <text evidence="1">Belongs to the UPF0145 family.</text>
</comment>
<dbReference type="EMBL" id="CP001144">
    <property type="protein sequence ID" value="ACH77200.1"/>
    <property type="molecule type" value="Genomic_DNA"/>
</dbReference>
<dbReference type="RefSeq" id="WP_001160727.1">
    <property type="nucleotide sequence ID" value="NC_011205.1"/>
</dbReference>
<dbReference type="SMR" id="B5FQ06"/>
<dbReference type="KEGG" id="sed:SeD_A0997"/>
<dbReference type="HOGENOM" id="CLU_117144_3_0_6"/>
<dbReference type="Proteomes" id="UP000008322">
    <property type="component" value="Chromosome"/>
</dbReference>
<dbReference type="Gene3D" id="3.30.110.70">
    <property type="entry name" value="Hypothetical protein apc22750. Chain B"/>
    <property type="match status" value="1"/>
</dbReference>
<dbReference type="HAMAP" id="MF_00338">
    <property type="entry name" value="UPF0145"/>
    <property type="match status" value="1"/>
</dbReference>
<dbReference type="InterPro" id="IPR035439">
    <property type="entry name" value="UPF0145_dom_sf"/>
</dbReference>
<dbReference type="InterPro" id="IPR002765">
    <property type="entry name" value="UPF0145_YbjQ-like"/>
</dbReference>
<dbReference type="NCBIfam" id="NF002776">
    <property type="entry name" value="PRK02877.1"/>
    <property type="match status" value="1"/>
</dbReference>
<dbReference type="PANTHER" id="PTHR34068">
    <property type="entry name" value="UPF0145 PROTEIN YBJQ"/>
    <property type="match status" value="1"/>
</dbReference>
<dbReference type="PANTHER" id="PTHR34068:SF1">
    <property type="entry name" value="UPF0145 PROTEIN YBJQ"/>
    <property type="match status" value="1"/>
</dbReference>
<dbReference type="Pfam" id="PF01906">
    <property type="entry name" value="YbjQ_1"/>
    <property type="match status" value="1"/>
</dbReference>
<dbReference type="SUPFAM" id="SSF117782">
    <property type="entry name" value="YbjQ-like"/>
    <property type="match status" value="1"/>
</dbReference>
<organism>
    <name type="scientific">Salmonella dublin (strain CT_02021853)</name>
    <dbReference type="NCBI Taxonomy" id="439851"/>
    <lineage>
        <taxon>Bacteria</taxon>
        <taxon>Pseudomonadati</taxon>
        <taxon>Pseudomonadota</taxon>
        <taxon>Gammaproteobacteria</taxon>
        <taxon>Enterobacterales</taxon>
        <taxon>Enterobacteriaceae</taxon>
        <taxon>Salmonella</taxon>
    </lineage>
</organism>
<evidence type="ECO:0000255" key="1">
    <source>
        <dbReference type="HAMAP-Rule" id="MF_00338"/>
    </source>
</evidence>
<proteinExistence type="inferred from homology"/>
<name>YBJQ_SALDC</name>